<protein>
    <recommendedName>
        <fullName>Probable ATP-dependent RNA helicase ddx3</fullName>
        <ecNumber>3.6.4.13</ecNumber>
    </recommendedName>
    <alternativeName>
        <fullName>DEAD box protein 3</fullName>
    </alternativeName>
</protein>
<dbReference type="EC" id="3.6.4.13"/>
<dbReference type="EMBL" id="AAFI02000056">
    <property type="protein sequence ID" value="EAL65597.1"/>
    <property type="molecule type" value="Genomic_DNA"/>
</dbReference>
<dbReference type="RefSeq" id="XP_638950.1">
    <property type="nucleotide sequence ID" value="XM_633858.1"/>
</dbReference>
<dbReference type="SMR" id="Q54QS3"/>
<dbReference type="FunCoup" id="Q54QS3">
    <property type="interactions" value="565"/>
</dbReference>
<dbReference type="STRING" id="44689.Q54QS3"/>
<dbReference type="PaxDb" id="44689-DDB0233447"/>
<dbReference type="EnsemblProtists" id="EAL65597">
    <property type="protein sequence ID" value="EAL65597"/>
    <property type="gene ID" value="DDB_G0283661"/>
</dbReference>
<dbReference type="GeneID" id="8624189"/>
<dbReference type="KEGG" id="ddi:DDB_G0283661"/>
<dbReference type="dictyBase" id="DDB_G0283661">
    <property type="gene designation" value="ddx3"/>
</dbReference>
<dbReference type="VEuPathDB" id="AmoebaDB:DDB_G0283661"/>
<dbReference type="eggNOG" id="KOG0335">
    <property type="taxonomic scope" value="Eukaryota"/>
</dbReference>
<dbReference type="HOGENOM" id="CLU_003041_16_3_1"/>
<dbReference type="InParanoid" id="Q54QS3"/>
<dbReference type="OMA" id="RFLNNQK"/>
<dbReference type="PhylomeDB" id="Q54QS3"/>
<dbReference type="Reactome" id="R-DDI-6798695">
    <property type="pathway name" value="Neutrophil degranulation"/>
</dbReference>
<dbReference type="PRO" id="PR:Q54QS3"/>
<dbReference type="Proteomes" id="UP000002195">
    <property type="component" value="Chromosome 4"/>
</dbReference>
<dbReference type="GO" id="GO:0005737">
    <property type="term" value="C:cytoplasm"/>
    <property type="evidence" value="ECO:0007669"/>
    <property type="project" value="UniProtKB-SubCell"/>
</dbReference>
<dbReference type="GO" id="GO:0005634">
    <property type="term" value="C:nucleus"/>
    <property type="evidence" value="ECO:0000318"/>
    <property type="project" value="GO_Central"/>
</dbReference>
<dbReference type="GO" id="GO:0005524">
    <property type="term" value="F:ATP binding"/>
    <property type="evidence" value="ECO:0007669"/>
    <property type="project" value="UniProtKB-KW"/>
</dbReference>
<dbReference type="GO" id="GO:0016887">
    <property type="term" value="F:ATP hydrolysis activity"/>
    <property type="evidence" value="ECO:0007669"/>
    <property type="project" value="RHEA"/>
</dbReference>
<dbReference type="GO" id="GO:0003729">
    <property type="term" value="F:mRNA binding"/>
    <property type="evidence" value="ECO:0000318"/>
    <property type="project" value="GO_Central"/>
</dbReference>
<dbReference type="GO" id="GO:0003724">
    <property type="term" value="F:RNA helicase activity"/>
    <property type="evidence" value="ECO:0000250"/>
    <property type="project" value="dictyBase"/>
</dbReference>
<dbReference type="GO" id="GO:0003743">
    <property type="term" value="F:translation initiation factor activity"/>
    <property type="evidence" value="ECO:0007669"/>
    <property type="project" value="UniProtKB-KW"/>
</dbReference>
<dbReference type="CDD" id="cd17967">
    <property type="entry name" value="DEADc_DDX3_DDX4"/>
    <property type="match status" value="1"/>
</dbReference>
<dbReference type="CDD" id="cd18787">
    <property type="entry name" value="SF2_C_DEAD"/>
    <property type="match status" value="1"/>
</dbReference>
<dbReference type="FunFam" id="3.40.50.300:FF:000008">
    <property type="entry name" value="ATP-dependent RNA helicase RhlB"/>
    <property type="match status" value="1"/>
</dbReference>
<dbReference type="FunFam" id="3.40.50.300:FF:000397">
    <property type="entry name" value="Probable ATP-dependent RNA helicase DDX4"/>
    <property type="match status" value="1"/>
</dbReference>
<dbReference type="Gene3D" id="3.40.50.300">
    <property type="entry name" value="P-loop containing nucleotide triphosphate hydrolases"/>
    <property type="match status" value="2"/>
</dbReference>
<dbReference type="InterPro" id="IPR011545">
    <property type="entry name" value="DEAD/DEAH_box_helicase_dom"/>
</dbReference>
<dbReference type="InterPro" id="IPR044763">
    <property type="entry name" value="Ded1/Dbp1_DEADc"/>
</dbReference>
<dbReference type="InterPro" id="IPR014001">
    <property type="entry name" value="Helicase_ATP-bd"/>
</dbReference>
<dbReference type="InterPro" id="IPR001650">
    <property type="entry name" value="Helicase_C-like"/>
</dbReference>
<dbReference type="InterPro" id="IPR027417">
    <property type="entry name" value="P-loop_NTPase"/>
</dbReference>
<dbReference type="InterPro" id="IPR000629">
    <property type="entry name" value="RNA-helicase_DEAD-box_CS"/>
</dbReference>
<dbReference type="InterPro" id="IPR014014">
    <property type="entry name" value="RNA_helicase_DEAD_Q_motif"/>
</dbReference>
<dbReference type="PANTHER" id="PTHR47958">
    <property type="entry name" value="ATP-DEPENDENT RNA HELICASE DBP3"/>
    <property type="match status" value="1"/>
</dbReference>
<dbReference type="Pfam" id="PF00270">
    <property type="entry name" value="DEAD"/>
    <property type="match status" value="1"/>
</dbReference>
<dbReference type="Pfam" id="PF00271">
    <property type="entry name" value="Helicase_C"/>
    <property type="match status" value="1"/>
</dbReference>
<dbReference type="SMART" id="SM00487">
    <property type="entry name" value="DEXDc"/>
    <property type="match status" value="1"/>
</dbReference>
<dbReference type="SMART" id="SM00490">
    <property type="entry name" value="HELICc"/>
    <property type="match status" value="1"/>
</dbReference>
<dbReference type="SUPFAM" id="SSF52540">
    <property type="entry name" value="P-loop containing nucleoside triphosphate hydrolases"/>
    <property type="match status" value="1"/>
</dbReference>
<dbReference type="PROSITE" id="PS00039">
    <property type="entry name" value="DEAD_ATP_HELICASE"/>
    <property type="match status" value="1"/>
</dbReference>
<dbReference type="PROSITE" id="PS51192">
    <property type="entry name" value="HELICASE_ATP_BIND_1"/>
    <property type="match status" value="1"/>
</dbReference>
<dbReference type="PROSITE" id="PS51194">
    <property type="entry name" value="HELICASE_CTER"/>
    <property type="match status" value="1"/>
</dbReference>
<dbReference type="PROSITE" id="PS51195">
    <property type="entry name" value="Q_MOTIF"/>
    <property type="match status" value="1"/>
</dbReference>
<feature type="chain" id="PRO_0000327417" description="Probable ATP-dependent RNA helicase ddx3">
    <location>
        <begin position="1"/>
        <end position="712"/>
    </location>
</feature>
<feature type="domain" description="Helicase ATP-binding" evidence="2">
    <location>
        <begin position="278"/>
        <end position="467"/>
    </location>
</feature>
<feature type="domain" description="Helicase C-terminal" evidence="3">
    <location>
        <begin position="477"/>
        <end position="638"/>
    </location>
</feature>
<feature type="region of interest" description="Disordered" evidence="4">
    <location>
        <begin position="1"/>
        <end position="183"/>
    </location>
</feature>
<feature type="region of interest" description="Disordered" evidence="4">
    <location>
        <begin position="644"/>
        <end position="712"/>
    </location>
</feature>
<feature type="short sequence motif" description="Q motif">
    <location>
        <begin position="247"/>
        <end position="275"/>
    </location>
</feature>
<feature type="short sequence motif" description="DEAD box">
    <location>
        <begin position="411"/>
        <end position="414"/>
    </location>
</feature>
<feature type="compositionally biased region" description="Polar residues" evidence="4">
    <location>
        <begin position="11"/>
        <end position="24"/>
    </location>
</feature>
<feature type="compositionally biased region" description="Low complexity" evidence="4">
    <location>
        <begin position="25"/>
        <end position="42"/>
    </location>
</feature>
<feature type="compositionally biased region" description="Basic and acidic residues" evidence="4">
    <location>
        <begin position="61"/>
        <end position="87"/>
    </location>
</feature>
<feature type="compositionally biased region" description="Low complexity" evidence="4">
    <location>
        <begin position="90"/>
        <end position="119"/>
    </location>
</feature>
<feature type="compositionally biased region" description="Gly residues" evidence="4">
    <location>
        <begin position="120"/>
        <end position="132"/>
    </location>
</feature>
<feature type="compositionally biased region" description="Low complexity" evidence="4">
    <location>
        <begin position="140"/>
        <end position="157"/>
    </location>
</feature>
<feature type="compositionally biased region" description="Gly residues" evidence="4">
    <location>
        <begin position="158"/>
        <end position="171"/>
    </location>
</feature>
<feature type="compositionally biased region" description="Low complexity" evidence="4">
    <location>
        <begin position="644"/>
        <end position="662"/>
    </location>
</feature>
<feature type="compositionally biased region" description="Gly residues" evidence="4">
    <location>
        <begin position="671"/>
        <end position="682"/>
    </location>
</feature>
<feature type="compositionally biased region" description="Basic and acidic residues" evidence="4">
    <location>
        <begin position="687"/>
        <end position="699"/>
    </location>
</feature>
<feature type="binding site" evidence="2">
    <location>
        <begin position="267"/>
        <end position="274"/>
    </location>
    <ligand>
        <name>ATP</name>
        <dbReference type="ChEBI" id="CHEBI:30616"/>
    </ligand>
</feature>
<feature type="binding site" evidence="2">
    <location>
        <begin position="291"/>
        <end position="298"/>
    </location>
    <ligand>
        <name>ATP</name>
        <dbReference type="ChEBI" id="CHEBI:30616"/>
    </ligand>
</feature>
<gene>
    <name type="primary">ddx3</name>
    <name type="ORF">DDB_G0283661</name>
</gene>
<proteinExistence type="inferred from homology"/>
<keyword id="KW-0067">ATP-binding</keyword>
<keyword id="KW-0963">Cytoplasm</keyword>
<keyword id="KW-0347">Helicase</keyword>
<keyword id="KW-0378">Hydrolase</keyword>
<keyword id="KW-0396">Initiation factor</keyword>
<keyword id="KW-0547">Nucleotide-binding</keyword>
<keyword id="KW-0648">Protein biosynthesis</keyword>
<keyword id="KW-1185">Reference proteome</keyword>
<keyword id="KW-0694">RNA-binding</keyword>
<name>DDX3_DICDI</name>
<accession>Q54QS3</accession>
<organism>
    <name type="scientific">Dictyostelium discoideum</name>
    <name type="common">Social amoeba</name>
    <dbReference type="NCBI Taxonomy" id="44689"/>
    <lineage>
        <taxon>Eukaryota</taxon>
        <taxon>Amoebozoa</taxon>
        <taxon>Evosea</taxon>
        <taxon>Eumycetozoa</taxon>
        <taxon>Dictyostelia</taxon>
        <taxon>Dictyosteliales</taxon>
        <taxon>Dictyosteliaceae</taxon>
        <taxon>Dictyostelium</taxon>
    </lineage>
</organism>
<sequence>MPIGNNKDNDGTTLNISGLTISDKSSSTSSNNNTTTTTTQTSEPYVPPSRRNKMNNSSGSSRDDYPSPSDRDNRDSPFNRDRRDDGYRGGNNFRENNSNNNNNSRDNYKSPSFSRNNNSNGGGSSSGSGGWDNGPREQGPPRGNSYSYSPNNSFSRGGNQGGYGNRGGSGSSFGKPANKNDRYYDRWSNFRDSRNHPEMKREFIDLEEHKAEEIFKKNDDNIGIDFNAYDDDDISIETSEHICAPLNSFADVDLGDVLLGNIKHAKYTKPTPVQKSALPIILKNRDLMACAQTGSGKTAAFLFPIISGILLDGAPEAPPAYKPGVPRAACPRALVLAPTRELAQQIFDEANKFSYGSPVSSVVIYGGAEVFHQINELDRGCDILVATTGRLVDLLMRGRVSLSKIKYLVLDEADRMLDMGFEPQIRQIISEFDMPGCRDRQTLMFSATFPKQIQNLAADFLYNYIFLKVGVVGTTQNITQRIEYVVEEDKNSYLLDYLSGLKSDGLCLIFVETKRSCDTLTYFLNQRNFPTTCIHGDLTQPERENALQSFRSFATPFLVATDIASRGLHIGNVNLVINFDLPTDIHIYVHRIGRTGRAGKKGLAISFFNEKNKPVGAELLKLMKASNQDIPDWFEKMVHNLRMSKGPSNSKSNSPFNKSYNSHHNRDDNRGGYGGGGGGNGGYSNNRNDRREDKSDYSMHHPYFSNNGGSYN</sequence>
<comment type="function">
    <text evidence="1">Probable ATP-binding RNA helicase which may be involved in translation initiation.</text>
</comment>
<comment type="catalytic activity">
    <reaction>
        <text>ATP + H2O = ADP + phosphate + H(+)</text>
        <dbReference type="Rhea" id="RHEA:13065"/>
        <dbReference type="ChEBI" id="CHEBI:15377"/>
        <dbReference type="ChEBI" id="CHEBI:15378"/>
        <dbReference type="ChEBI" id="CHEBI:30616"/>
        <dbReference type="ChEBI" id="CHEBI:43474"/>
        <dbReference type="ChEBI" id="CHEBI:456216"/>
        <dbReference type="EC" id="3.6.4.13"/>
    </reaction>
</comment>
<comment type="subcellular location">
    <subcellularLocation>
        <location evidence="1">Cytoplasm</location>
    </subcellularLocation>
</comment>
<comment type="domain">
    <text>The Q motif is unique to and characteristic of the DEAD box family of RNA helicases and controls ATP binding and hydrolysis.</text>
</comment>
<comment type="similarity">
    <text evidence="5">Belongs to the DEAD box helicase family. DDX3/DED1 subfamily.</text>
</comment>
<evidence type="ECO:0000250" key="1"/>
<evidence type="ECO:0000255" key="2">
    <source>
        <dbReference type="PROSITE-ProRule" id="PRU00541"/>
    </source>
</evidence>
<evidence type="ECO:0000255" key="3">
    <source>
        <dbReference type="PROSITE-ProRule" id="PRU00542"/>
    </source>
</evidence>
<evidence type="ECO:0000256" key="4">
    <source>
        <dbReference type="SAM" id="MobiDB-lite"/>
    </source>
</evidence>
<evidence type="ECO:0000305" key="5"/>
<reference key="1">
    <citation type="journal article" date="2005" name="Nature">
        <title>The genome of the social amoeba Dictyostelium discoideum.</title>
        <authorList>
            <person name="Eichinger L."/>
            <person name="Pachebat J.A."/>
            <person name="Gloeckner G."/>
            <person name="Rajandream M.A."/>
            <person name="Sucgang R."/>
            <person name="Berriman M."/>
            <person name="Song J."/>
            <person name="Olsen R."/>
            <person name="Szafranski K."/>
            <person name="Xu Q."/>
            <person name="Tunggal B."/>
            <person name="Kummerfeld S."/>
            <person name="Madera M."/>
            <person name="Konfortov B.A."/>
            <person name="Rivero F."/>
            <person name="Bankier A.T."/>
            <person name="Lehmann R."/>
            <person name="Hamlin N."/>
            <person name="Davies R."/>
            <person name="Gaudet P."/>
            <person name="Fey P."/>
            <person name="Pilcher K."/>
            <person name="Chen G."/>
            <person name="Saunders D."/>
            <person name="Sodergren E.J."/>
            <person name="Davis P."/>
            <person name="Kerhornou A."/>
            <person name="Nie X."/>
            <person name="Hall N."/>
            <person name="Anjard C."/>
            <person name="Hemphill L."/>
            <person name="Bason N."/>
            <person name="Farbrother P."/>
            <person name="Desany B."/>
            <person name="Just E."/>
            <person name="Morio T."/>
            <person name="Rost R."/>
            <person name="Churcher C.M."/>
            <person name="Cooper J."/>
            <person name="Haydock S."/>
            <person name="van Driessche N."/>
            <person name="Cronin A."/>
            <person name="Goodhead I."/>
            <person name="Muzny D.M."/>
            <person name="Mourier T."/>
            <person name="Pain A."/>
            <person name="Lu M."/>
            <person name="Harper D."/>
            <person name="Lindsay R."/>
            <person name="Hauser H."/>
            <person name="James K.D."/>
            <person name="Quiles M."/>
            <person name="Madan Babu M."/>
            <person name="Saito T."/>
            <person name="Buchrieser C."/>
            <person name="Wardroper A."/>
            <person name="Felder M."/>
            <person name="Thangavelu M."/>
            <person name="Johnson D."/>
            <person name="Knights A."/>
            <person name="Loulseged H."/>
            <person name="Mungall K.L."/>
            <person name="Oliver K."/>
            <person name="Price C."/>
            <person name="Quail M.A."/>
            <person name="Urushihara H."/>
            <person name="Hernandez J."/>
            <person name="Rabbinowitsch E."/>
            <person name="Steffen D."/>
            <person name="Sanders M."/>
            <person name="Ma J."/>
            <person name="Kohara Y."/>
            <person name="Sharp S."/>
            <person name="Simmonds M.N."/>
            <person name="Spiegler S."/>
            <person name="Tivey A."/>
            <person name="Sugano S."/>
            <person name="White B."/>
            <person name="Walker D."/>
            <person name="Woodward J.R."/>
            <person name="Winckler T."/>
            <person name="Tanaka Y."/>
            <person name="Shaulsky G."/>
            <person name="Schleicher M."/>
            <person name="Weinstock G.M."/>
            <person name="Rosenthal A."/>
            <person name="Cox E.C."/>
            <person name="Chisholm R.L."/>
            <person name="Gibbs R.A."/>
            <person name="Loomis W.F."/>
            <person name="Platzer M."/>
            <person name="Kay R.R."/>
            <person name="Williams J.G."/>
            <person name="Dear P.H."/>
            <person name="Noegel A.A."/>
            <person name="Barrell B.G."/>
            <person name="Kuspa A."/>
        </authorList>
    </citation>
    <scope>NUCLEOTIDE SEQUENCE [LARGE SCALE GENOMIC DNA]</scope>
    <source>
        <strain>AX4</strain>
    </source>
</reference>